<comment type="function">
    <text evidence="1">Small multifunctional phosphoprotein involved in virion morphogenesis, egress and counteracting host innate immunity.</text>
</comment>
<comment type="subcellular location">
    <subcellularLocation>
        <location evidence="1">Host endoplasmic reticulum membrane</location>
        <topology evidence="1">Lipid-anchor</topology>
    </subcellularLocation>
    <subcellularLocation>
        <location evidence="1">Host cytoplasm</location>
        <location evidence="1">Host cytoskeleton</location>
    </subcellularLocation>
    <subcellularLocation>
        <location evidence="1">Virion</location>
    </subcellularLocation>
    <subcellularLocation>
        <location evidence="1">Host cell membrane</location>
        <topology evidence="1">Lipid-anchor</topology>
    </subcellularLocation>
    <text evidence="1">The N-terminal region seems to associate with the cytoskeleton probably via one of its hydrophobic regions. Present on the surface of the membrane-wrapped virions.</text>
</comment>
<comment type="domain">
    <text evidence="1">The PSAP motif is necessary for the release of membrane-wrapped virions from infected cells.</text>
</comment>
<comment type="PTM">
    <text evidence="1">Palmitoylated in the N-terminus.</text>
</comment>
<comment type="miscellaneous">
    <text evidence="1">The viral particles present in feces and bile are non-enveloped, while those in circulating blood and culture supernatants are covered with a cellular membrane (quasi-enveloped).</text>
</comment>
<comment type="similarity">
    <text evidence="3">Belongs to the hepevirus ORF3 protein family.</text>
</comment>
<gene>
    <name type="ORF">ORF3</name>
</gene>
<evidence type="ECO:0000250" key="1">
    <source>
        <dbReference type="UniProtKB" id="Q81870"/>
    </source>
</evidence>
<evidence type="ECO:0000256" key="2">
    <source>
        <dbReference type="SAM" id="MobiDB-lite"/>
    </source>
</evidence>
<evidence type="ECO:0000305" key="3"/>
<keyword id="KW-1032">Host cell membrane</keyword>
<keyword id="KW-1035">Host cytoplasm</keyword>
<keyword id="KW-1037">Host cytoskeleton</keyword>
<keyword id="KW-1038">Host endoplasmic reticulum</keyword>
<keyword id="KW-1043">Host membrane</keyword>
<keyword id="KW-0449">Lipoprotein</keyword>
<keyword id="KW-0472">Membrane</keyword>
<keyword id="KW-1185">Reference proteome</keyword>
<keyword id="KW-0946">Virion</keyword>
<reference key="1">
    <citation type="journal article" date="2001" name="J. Gen. Virol.">
        <title>Genetic identification and characterization of a novel virus related to human hepatitis E virus from chickens with hepatitis-splenomegaly syndrome in the United States.</title>
        <authorList>
            <person name="Haqshenas G."/>
            <person name="Shivaprasad H.L."/>
            <person name="Woolcock P.R."/>
            <person name="Read D.H."/>
            <person name="Meng X.J."/>
        </authorList>
    </citation>
    <scope>NUCLEOTIDE SEQUENCE [GENOMIC RNA]</scope>
</reference>
<reference key="2">
    <citation type="journal article" date="2004" name="J. Gen. Virol.">
        <title>Determination and analysis of the complete genomic sequence of avian hepatitis E virus (avian HEV) and attempts to infect rhesus monkeys with avian HEV.</title>
        <authorList>
            <person name="Huang F.F."/>
            <person name="Sun Z.F."/>
            <person name="Emerson S.U."/>
            <person name="Purcell R.H."/>
            <person name="Shivaprasad H.L."/>
            <person name="Pierson F.W."/>
            <person name="Toth T.E."/>
            <person name="Meng X.J."/>
        </authorList>
    </citation>
    <scope>NUCLEOTIDE SEQUENCE [GENOMIC RNA]</scope>
</reference>
<dbReference type="EMBL" id="AY043166">
    <property type="protein sequence ID" value="AAL13368.1"/>
    <property type="molecule type" value="Genomic_RNA"/>
</dbReference>
<dbReference type="EMBL" id="AY535004">
    <property type="protein sequence ID" value="AAS45832.1"/>
    <property type="molecule type" value="Genomic_RNA"/>
</dbReference>
<dbReference type="RefSeq" id="YP_009001466.1">
    <property type="nucleotide sequence ID" value="NC_023425.1"/>
</dbReference>
<dbReference type="KEGG" id="vg:18263427"/>
<dbReference type="Proteomes" id="UP000007439">
    <property type="component" value="Genome"/>
</dbReference>
<dbReference type="Proteomes" id="UP000139094">
    <property type="component" value="Segment"/>
</dbReference>
<dbReference type="GO" id="GO:0044167">
    <property type="term" value="C:host cell endoplasmic reticulum membrane"/>
    <property type="evidence" value="ECO:0007669"/>
    <property type="project" value="UniProtKB-SubCell"/>
</dbReference>
<dbReference type="GO" id="GO:0020002">
    <property type="term" value="C:host cell plasma membrane"/>
    <property type="evidence" value="ECO:0007669"/>
    <property type="project" value="UniProtKB-SubCell"/>
</dbReference>
<dbReference type="GO" id="GO:0044163">
    <property type="term" value="C:host cytoskeleton"/>
    <property type="evidence" value="ECO:0007669"/>
    <property type="project" value="UniProtKB-SubCell"/>
</dbReference>
<dbReference type="GO" id="GO:0016020">
    <property type="term" value="C:membrane"/>
    <property type="evidence" value="ECO:0007669"/>
    <property type="project" value="UniProtKB-KW"/>
</dbReference>
<dbReference type="GO" id="GO:0044423">
    <property type="term" value="C:virion component"/>
    <property type="evidence" value="ECO:0007669"/>
    <property type="project" value="UniProtKB-KW"/>
</dbReference>
<organism>
    <name type="scientific">Avian hepatitis E virus (isolate Chicken/California/Meng)</name>
    <name type="common">AHEV</name>
    <dbReference type="NCBI Taxonomy" id="516993"/>
    <lineage>
        <taxon>Viruses</taxon>
        <taxon>Riboviria</taxon>
        <taxon>Orthornavirae</taxon>
        <taxon>Kitrinoviricota</taxon>
        <taxon>Alsuviricetes</taxon>
        <taxon>Hepelivirales</taxon>
        <taxon>Hepeviridae</taxon>
        <taxon>Orthohepevirinae</taxon>
        <taxon>Avihepevirus</taxon>
        <taxon>Avihepevirus magniiecur</taxon>
    </lineage>
</organism>
<sequence>MCLSCQFWCLECQESGVGCRCVDCCSCLQCAAGCQGAPKRSQPEAGVASAAVTIQPSGALNNAPREPSAPPLSQTLSPRQVLARYQM</sequence>
<feature type="chain" id="PRO_0000334538" description="Protein ORF3">
    <location>
        <begin position="1"/>
        <end position="87"/>
    </location>
</feature>
<feature type="region of interest" description="Disordered" evidence="2">
    <location>
        <begin position="58"/>
        <end position="87"/>
    </location>
</feature>
<feature type="short sequence motif" description="PTAP/PSAP motif" evidence="1">
    <location>
        <begin position="67"/>
        <end position="70"/>
    </location>
</feature>
<accession>Q913Y8</accession>
<name>ORF3_AHEV</name>
<protein>
    <recommendedName>
        <fullName>Protein ORF3</fullName>
        <shortName>pORF3</shortName>
    </recommendedName>
</protein>
<proteinExistence type="inferred from homology"/>
<organismHost>
    <name type="scientific">Gallus gallus</name>
    <name type="common">Chicken</name>
    <dbReference type="NCBI Taxonomy" id="9031"/>
</organismHost>